<comment type="function">
    <text evidence="2">Involved in the activation of the KinB signaling pathway of sporulation.</text>
</comment>
<comment type="subcellular location">
    <subcellularLocation>
        <location evidence="4">Cell membrane</location>
        <topology evidence="4">Multi-pass membrane protein</topology>
    </subcellularLocation>
</comment>
<comment type="disruption phenotype">
    <text evidence="2">No effect on sporulation as single mutant, but when associated with deletion of kinA, sporulation efficiency is significantly decreased.</text>
</comment>
<comment type="sequence caution" evidence="3">
    <conflict type="erroneous initiation">
        <sequence resource="EMBL-CDS" id="AAA22469"/>
    </conflict>
    <text>Extended N-terminus.</text>
</comment>
<keyword id="KW-1003">Cell membrane</keyword>
<keyword id="KW-0472">Membrane</keyword>
<keyword id="KW-1185">Reference proteome</keyword>
<keyword id="KW-0749">Sporulation</keyword>
<keyword id="KW-0812">Transmembrane</keyword>
<keyword id="KW-1133">Transmembrane helix</keyword>
<gene>
    <name type="primary">kbaA</name>
    <name type="synonym">ybaM</name>
    <name type="synonym">ybxC</name>
    <name type="ordered locus">BSU01560</name>
</gene>
<proteinExistence type="predicted"/>
<accession>P16449</accession>
<dbReference type="EMBL" id="U23797">
    <property type="protein sequence ID" value="AAC44000.1"/>
    <property type="molecule type" value="Genomic_DNA"/>
</dbReference>
<dbReference type="EMBL" id="D64126">
    <property type="protein sequence ID" value="BAA10996.1"/>
    <property type="molecule type" value="Genomic_DNA"/>
</dbReference>
<dbReference type="EMBL" id="AL009126">
    <property type="protein sequence ID" value="CAB11932.1"/>
    <property type="molecule type" value="Genomic_DNA"/>
</dbReference>
<dbReference type="EMBL" id="M27259">
    <property type="protein sequence ID" value="AAA22469.2"/>
    <property type="status" value="ALT_INIT"/>
    <property type="molecule type" value="Genomic_DNA"/>
</dbReference>
<dbReference type="PIR" id="JC6024">
    <property type="entry name" value="JC6024"/>
</dbReference>
<dbReference type="RefSeq" id="NP_388037.1">
    <property type="nucleotide sequence ID" value="NC_000964.3"/>
</dbReference>
<dbReference type="RefSeq" id="WP_004399693.1">
    <property type="nucleotide sequence ID" value="NZ_OZ025638.1"/>
</dbReference>
<dbReference type="SMR" id="P16449"/>
<dbReference type="FunCoup" id="P16449">
    <property type="interactions" value="42"/>
</dbReference>
<dbReference type="STRING" id="224308.BSU01560"/>
<dbReference type="PaxDb" id="224308-BSU01560"/>
<dbReference type="EnsemblBacteria" id="CAB11932">
    <property type="protein sequence ID" value="CAB11932"/>
    <property type="gene ID" value="BSU_01560"/>
</dbReference>
<dbReference type="GeneID" id="938913"/>
<dbReference type="KEGG" id="bsu:BSU01560"/>
<dbReference type="PATRIC" id="fig|224308.179.peg.160"/>
<dbReference type="eggNOG" id="COG2194">
    <property type="taxonomic scope" value="Bacteria"/>
</dbReference>
<dbReference type="InParanoid" id="P16449"/>
<dbReference type="OrthoDB" id="2374256at2"/>
<dbReference type="BioCyc" id="BSUB:BSU01560-MONOMER"/>
<dbReference type="Proteomes" id="UP000001570">
    <property type="component" value="Chromosome"/>
</dbReference>
<dbReference type="GO" id="GO:0005886">
    <property type="term" value="C:plasma membrane"/>
    <property type="evidence" value="ECO:0007669"/>
    <property type="project" value="UniProtKB-SubCell"/>
</dbReference>
<dbReference type="GO" id="GO:0045881">
    <property type="term" value="P:positive regulation of sporulation resulting in formation of a cellular spore"/>
    <property type="evidence" value="ECO:0000316"/>
    <property type="project" value="UniProtKB"/>
</dbReference>
<dbReference type="GO" id="GO:0030435">
    <property type="term" value="P:sporulation resulting in formation of a cellular spore"/>
    <property type="evidence" value="ECO:0007669"/>
    <property type="project" value="UniProtKB-KW"/>
</dbReference>
<dbReference type="InterPro" id="IPR024164">
    <property type="entry name" value="KinB-signalling_activ"/>
</dbReference>
<dbReference type="Pfam" id="PF14089">
    <property type="entry name" value="KbaA"/>
    <property type="match status" value="1"/>
</dbReference>
<dbReference type="PIRSF" id="PIRSF029886">
    <property type="entry name" value="KBAA"/>
    <property type="match status" value="1"/>
</dbReference>
<dbReference type="SMART" id="SM01251">
    <property type="entry name" value="KbaA"/>
    <property type="match status" value="1"/>
</dbReference>
<evidence type="ECO:0000255" key="1"/>
<evidence type="ECO:0000269" key="2">
    <source>
    </source>
</evidence>
<evidence type="ECO:0000305" key="3"/>
<evidence type="ECO:0000305" key="4">
    <source>
    </source>
</evidence>
<name>KBAA_BACSU</name>
<protein>
    <recommendedName>
        <fullName>KinB-signaling pathway activation protein</fullName>
    </recommendedName>
</protein>
<organism>
    <name type="scientific">Bacillus subtilis (strain 168)</name>
    <dbReference type="NCBI Taxonomy" id="224308"/>
    <lineage>
        <taxon>Bacteria</taxon>
        <taxon>Bacillati</taxon>
        <taxon>Bacillota</taxon>
        <taxon>Bacilli</taxon>
        <taxon>Bacillales</taxon>
        <taxon>Bacillaceae</taxon>
        <taxon>Bacillus</taxon>
    </lineage>
</organism>
<sequence>MKSRGLVRFFFSILAVGALITSIVGFALKWGEYRGLFLTFEAGQIFSVLFWFIGVGMIFSVISQMGFFVFLTVHRFALEILRSSSLWNLLQLFFILFVAFDLMYVRFLFFGESGESLAGYAWLPVFLLIFGVITAYIKQKQSSKKTFVSSLFLMVVITALEWFPALRVNDEDWLYLMLFPLMACNAFQLLMLPKFAAK</sequence>
<feature type="chain" id="PRO_0000084297" description="KinB-signaling pathway activation protein">
    <location>
        <begin position="1"/>
        <end position="198"/>
    </location>
</feature>
<feature type="transmembrane region" description="Helical" evidence="1">
    <location>
        <begin position="9"/>
        <end position="29"/>
    </location>
</feature>
<feature type="transmembrane region" description="Helical" evidence="1">
    <location>
        <begin position="42"/>
        <end position="62"/>
    </location>
</feature>
<feature type="transmembrane region" description="Helical" evidence="1">
    <location>
        <begin position="90"/>
        <end position="110"/>
    </location>
</feature>
<feature type="transmembrane region" description="Helical" evidence="1">
    <location>
        <begin position="117"/>
        <end position="137"/>
    </location>
</feature>
<feature type="transmembrane region" description="Helical" evidence="1">
    <location>
        <begin position="146"/>
        <end position="166"/>
    </location>
</feature>
<feature type="transmembrane region" description="Helical" evidence="1">
    <location>
        <begin position="173"/>
        <end position="193"/>
    </location>
</feature>
<reference key="1">
    <citation type="journal article" date="1996" name="J. Bacteriol.">
        <title>Identification of a membrane protein involved in activation of the KinB pathway to sporulation in Bacillus subtilis.</title>
        <authorList>
            <person name="Dartois V."/>
            <person name="Djavakhishvili T."/>
            <person name="Hoch J.A."/>
        </authorList>
    </citation>
    <scope>NUCLEOTIDE SEQUENCE [GENOMIC DNA]</scope>
    <scope>FUNCTION</scope>
    <scope>SUBCELLULAR LOCATION</scope>
    <scope>DISRUPTION PHENOTYPE</scope>
    <source>
        <strain>168 / JH642</strain>
    </source>
</reference>
<reference key="2">
    <citation type="journal article" date="1996" name="Microbiology">
        <title>Sequence analysis of a 50 kb region between spo0H and rrnH on the Bacillus subtilis chromosome.</title>
        <authorList>
            <person name="Yasumoto K."/>
            <person name="Liu H."/>
            <person name="Jeong S.M."/>
            <person name="Ohashi Y."/>
            <person name="Kakinuma S."/>
            <person name="Tanaka K."/>
            <person name="Kawamura F."/>
            <person name="Yoshikawa H."/>
            <person name="Takahashi H."/>
        </authorList>
    </citation>
    <scope>NUCLEOTIDE SEQUENCE [GENOMIC DNA]</scope>
    <source>
        <strain>168</strain>
    </source>
</reference>
<reference key="3">
    <citation type="journal article" date="1997" name="Nature">
        <title>The complete genome sequence of the Gram-positive bacterium Bacillus subtilis.</title>
        <authorList>
            <person name="Kunst F."/>
            <person name="Ogasawara N."/>
            <person name="Moszer I."/>
            <person name="Albertini A.M."/>
            <person name="Alloni G."/>
            <person name="Azevedo V."/>
            <person name="Bertero M.G."/>
            <person name="Bessieres P."/>
            <person name="Bolotin A."/>
            <person name="Borchert S."/>
            <person name="Borriss R."/>
            <person name="Boursier L."/>
            <person name="Brans A."/>
            <person name="Braun M."/>
            <person name="Brignell S.C."/>
            <person name="Bron S."/>
            <person name="Brouillet S."/>
            <person name="Bruschi C.V."/>
            <person name="Caldwell B."/>
            <person name="Capuano V."/>
            <person name="Carter N.M."/>
            <person name="Choi S.-K."/>
            <person name="Codani J.-J."/>
            <person name="Connerton I.F."/>
            <person name="Cummings N.J."/>
            <person name="Daniel R.A."/>
            <person name="Denizot F."/>
            <person name="Devine K.M."/>
            <person name="Duesterhoeft A."/>
            <person name="Ehrlich S.D."/>
            <person name="Emmerson P.T."/>
            <person name="Entian K.-D."/>
            <person name="Errington J."/>
            <person name="Fabret C."/>
            <person name="Ferrari E."/>
            <person name="Foulger D."/>
            <person name="Fritz C."/>
            <person name="Fujita M."/>
            <person name="Fujita Y."/>
            <person name="Fuma S."/>
            <person name="Galizzi A."/>
            <person name="Galleron N."/>
            <person name="Ghim S.-Y."/>
            <person name="Glaser P."/>
            <person name="Goffeau A."/>
            <person name="Golightly E.J."/>
            <person name="Grandi G."/>
            <person name="Guiseppi G."/>
            <person name="Guy B.J."/>
            <person name="Haga K."/>
            <person name="Haiech J."/>
            <person name="Harwood C.R."/>
            <person name="Henaut A."/>
            <person name="Hilbert H."/>
            <person name="Holsappel S."/>
            <person name="Hosono S."/>
            <person name="Hullo M.-F."/>
            <person name="Itaya M."/>
            <person name="Jones L.-M."/>
            <person name="Joris B."/>
            <person name="Karamata D."/>
            <person name="Kasahara Y."/>
            <person name="Klaerr-Blanchard M."/>
            <person name="Klein C."/>
            <person name="Kobayashi Y."/>
            <person name="Koetter P."/>
            <person name="Koningstein G."/>
            <person name="Krogh S."/>
            <person name="Kumano M."/>
            <person name="Kurita K."/>
            <person name="Lapidus A."/>
            <person name="Lardinois S."/>
            <person name="Lauber J."/>
            <person name="Lazarevic V."/>
            <person name="Lee S.-M."/>
            <person name="Levine A."/>
            <person name="Liu H."/>
            <person name="Masuda S."/>
            <person name="Mauel C."/>
            <person name="Medigue C."/>
            <person name="Medina N."/>
            <person name="Mellado R.P."/>
            <person name="Mizuno M."/>
            <person name="Moestl D."/>
            <person name="Nakai S."/>
            <person name="Noback M."/>
            <person name="Noone D."/>
            <person name="O'Reilly M."/>
            <person name="Ogawa K."/>
            <person name="Ogiwara A."/>
            <person name="Oudega B."/>
            <person name="Park S.-H."/>
            <person name="Parro V."/>
            <person name="Pohl T.M."/>
            <person name="Portetelle D."/>
            <person name="Porwollik S."/>
            <person name="Prescott A.M."/>
            <person name="Presecan E."/>
            <person name="Pujic P."/>
            <person name="Purnelle B."/>
            <person name="Rapoport G."/>
            <person name="Rey M."/>
            <person name="Reynolds S."/>
            <person name="Rieger M."/>
            <person name="Rivolta C."/>
            <person name="Rocha E."/>
            <person name="Roche B."/>
            <person name="Rose M."/>
            <person name="Sadaie Y."/>
            <person name="Sato T."/>
            <person name="Scanlan E."/>
            <person name="Schleich S."/>
            <person name="Schroeter R."/>
            <person name="Scoffone F."/>
            <person name="Sekiguchi J."/>
            <person name="Sekowska A."/>
            <person name="Seror S.J."/>
            <person name="Serror P."/>
            <person name="Shin B.-S."/>
            <person name="Soldo B."/>
            <person name="Sorokin A."/>
            <person name="Tacconi E."/>
            <person name="Takagi T."/>
            <person name="Takahashi H."/>
            <person name="Takemaru K."/>
            <person name="Takeuchi M."/>
            <person name="Tamakoshi A."/>
            <person name="Tanaka T."/>
            <person name="Terpstra P."/>
            <person name="Tognoni A."/>
            <person name="Tosato V."/>
            <person name="Uchiyama S."/>
            <person name="Vandenbol M."/>
            <person name="Vannier F."/>
            <person name="Vassarotti A."/>
            <person name="Viari A."/>
            <person name="Wambutt R."/>
            <person name="Wedler E."/>
            <person name="Wedler H."/>
            <person name="Weitzenegger T."/>
            <person name="Winters P."/>
            <person name="Wipat A."/>
            <person name="Yamamoto H."/>
            <person name="Yamane K."/>
            <person name="Yasumoto K."/>
            <person name="Yata K."/>
            <person name="Yoshida K."/>
            <person name="Yoshikawa H.-F."/>
            <person name="Zumstein E."/>
            <person name="Yoshikawa H."/>
            <person name="Danchin A."/>
        </authorList>
    </citation>
    <scope>NUCLEOTIDE SEQUENCE [LARGE SCALE GENOMIC DNA]</scope>
    <source>
        <strain>168</strain>
    </source>
</reference>
<reference key="4">
    <citation type="journal article" date="1989" name="J. Gen. Microbiol.">
        <title>Cloning and sequencing of the gerD gene of Bacillus subtilis.</title>
        <authorList>
            <person name="Yon J.R."/>
            <person name="Sammons R.L."/>
            <person name="Smith D.A."/>
        </authorList>
    </citation>
    <scope>NUCLEOTIDE SEQUENCE [GENOMIC DNA] OF 1-91</scope>
    <source>
        <strain>168</strain>
    </source>
</reference>